<gene>
    <name type="ordered locus">Rpic_2808</name>
</gene>
<evidence type="ECO:0000255" key="1">
    <source>
        <dbReference type="HAMAP-Rule" id="MF_01187"/>
    </source>
</evidence>
<name>Y2808_RALPJ</name>
<proteinExistence type="inferred from homology"/>
<dbReference type="EMBL" id="CP001068">
    <property type="protein sequence ID" value="ACD27932.1"/>
    <property type="molecule type" value="Genomic_DNA"/>
</dbReference>
<dbReference type="SMR" id="B2UB83"/>
<dbReference type="STRING" id="402626.Rpic_2808"/>
<dbReference type="KEGG" id="rpi:Rpic_2808"/>
<dbReference type="eggNOG" id="COG2835">
    <property type="taxonomic scope" value="Bacteria"/>
</dbReference>
<dbReference type="HOGENOM" id="CLU_155659_3_0_4"/>
<dbReference type="GO" id="GO:0005829">
    <property type="term" value="C:cytosol"/>
    <property type="evidence" value="ECO:0007669"/>
    <property type="project" value="TreeGrafter"/>
</dbReference>
<dbReference type="FunFam" id="2.20.25.10:FF:000002">
    <property type="entry name" value="UPF0434 protein YcaR"/>
    <property type="match status" value="1"/>
</dbReference>
<dbReference type="Gene3D" id="2.20.25.10">
    <property type="match status" value="1"/>
</dbReference>
<dbReference type="HAMAP" id="MF_01187">
    <property type="entry name" value="UPF0434"/>
    <property type="match status" value="1"/>
</dbReference>
<dbReference type="InterPro" id="IPR005651">
    <property type="entry name" value="Trm112-like"/>
</dbReference>
<dbReference type="PANTHER" id="PTHR33505:SF4">
    <property type="entry name" value="PROTEIN PREY, MITOCHONDRIAL"/>
    <property type="match status" value="1"/>
</dbReference>
<dbReference type="PANTHER" id="PTHR33505">
    <property type="entry name" value="ZGC:162634"/>
    <property type="match status" value="1"/>
</dbReference>
<dbReference type="Pfam" id="PF03966">
    <property type="entry name" value="Trm112p"/>
    <property type="match status" value="1"/>
</dbReference>
<dbReference type="SUPFAM" id="SSF158997">
    <property type="entry name" value="Trm112p-like"/>
    <property type="match status" value="1"/>
</dbReference>
<comment type="similarity">
    <text evidence="1">Belongs to the UPF0434 family.</text>
</comment>
<sequence>MDNRLLEILVCPLCKGTLQHDRANNELICHVDKLAYPIRDGIPVMLADEARQTVEGTPVDPA</sequence>
<feature type="chain" id="PRO_1000138323" description="UPF0434 protein Rpic_2808">
    <location>
        <begin position="1"/>
        <end position="62"/>
    </location>
</feature>
<accession>B2UB83</accession>
<reference key="1">
    <citation type="submission" date="2008-05" db="EMBL/GenBank/DDBJ databases">
        <title>Complete sequence of chromosome 1 of Ralstonia pickettii 12J.</title>
        <authorList>
            <person name="Lucas S."/>
            <person name="Copeland A."/>
            <person name="Lapidus A."/>
            <person name="Glavina del Rio T."/>
            <person name="Dalin E."/>
            <person name="Tice H."/>
            <person name="Bruce D."/>
            <person name="Goodwin L."/>
            <person name="Pitluck S."/>
            <person name="Meincke L."/>
            <person name="Brettin T."/>
            <person name="Detter J.C."/>
            <person name="Han C."/>
            <person name="Kuske C.R."/>
            <person name="Schmutz J."/>
            <person name="Larimer F."/>
            <person name="Land M."/>
            <person name="Hauser L."/>
            <person name="Kyrpides N."/>
            <person name="Mikhailova N."/>
            <person name="Marsh T."/>
            <person name="Richardson P."/>
        </authorList>
    </citation>
    <scope>NUCLEOTIDE SEQUENCE [LARGE SCALE GENOMIC DNA]</scope>
    <source>
        <strain>12J</strain>
    </source>
</reference>
<protein>
    <recommendedName>
        <fullName evidence="1">UPF0434 protein Rpic_2808</fullName>
    </recommendedName>
</protein>
<organism>
    <name type="scientific">Ralstonia pickettii (strain 12J)</name>
    <dbReference type="NCBI Taxonomy" id="402626"/>
    <lineage>
        <taxon>Bacteria</taxon>
        <taxon>Pseudomonadati</taxon>
        <taxon>Pseudomonadota</taxon>
        <taxon>Betaproteobacteria</taxon>
        <taxon>Burkholderiales</taxon>
        <taxon>Burkholderiaceae</taxon>
        <taxon>Ralstonia</taxon>
    </lineage>
</organism>